<gene>
    <name evidence="1" type="primary">rplN</name>
    <name type="ordered locus">NAMH_1631</name>
</gene>
<comment type="function">
    <text evidence="1">Binds to 23S rRNA. Forms part of two intersubunit bridges in the 70S ribosome.</text>
</comment>
<comment type="subunit">
    <text evidence="1">Part of the 50S ribosomal subunit. Forms a cluster with proteins L3 and L19. In the 70S ribosome, L14 and L19 interact and together make contacts with the 16S rRNA in bridges B5 and B8.</text>
</comment>
<comment type="similarity">
    <text evidence="1">Belongs to the universal ribosomal protein uL14 family.</text>
</comment>
<accession>B9L6M3</accession>
<organism>
    <name type="scientific">Nautilia profundicola (strain ATCC BAA-1463 / DSM 18972 / AmH)</name>
    <dbReference type="NCBI Taxonomy" id="598659"/>
    <lineage>
        <taxon>Bacteria</taxon>
        <taxon>Pseudomonadati</taxon>
        <taxon>Campylobacterota</taxon>
        <taxon>Epsilonproteobacteria</taxon>
        <taxon>Nautiliales</taxon>
        <taxon>Nautiliaceae</taxon>
        <taxon>Nautilia</taxon>
    </lineage>
</organism>
<sequence length="122" mass="13392">MIQPFTRLKVADNSGAKEIMCIKVLGGSKRRYASVGDIIVASVKKALPNGKIKKGQVVKAVIVRTKKEVQRENGSLIRFDDNAAVIIDAKKEPIGTRIFGPIAREVRYEGFQKITSLAPEVL</sequence>
<evidence type="ECO:0000255" key="1">
    <source>
        <dbReference type="HAMAP-Rule" id="MF_01367"/>
    </source>
</evidence>
<evidence type="ECO:0000305" key="2"/>
<protein>
    <recommendedName>
        <fullName evidence="1">Large ribosomal subunit protein uL14</fullName>
    </recommendedName>
    <alternativeName>
        <fullName evidence="2">50S ribosomal protein L14</fullName>
    </alternativeName>
</protein>
<name>RL14_NAUPA</name>
<reference key="1">
    <citation type="journal article" date="2009" name="PLoS Genet.">
        <title>Adaptations to submarine hydrothermal environments exemplified by the genome of Nautilia profundicola.</title>
        <authorList>
            <person name="Campbell B.J."/>
            <person name="Smith J.L."/>
            <person name="Hanson T.E."/>
            <person name="Klotz M.G."/>
            <person name="Stein L.Y."/>
            <person name="Lee C.K."/>
            <person name="Wu D."/>
            <person name="Robinson J.M."/>
            <person name="Khouri H.M."/>
            <person name="Eisen J.A."/>
            <person name="Cary S.C."/>
        </authorList>
    </citation>
    <scope>NUCLEOTIDE SEQUENCE [LARGE SCALE GENOMIC DNA]</scope>
    <source>
        <strain>ATCC BAA-1463 / DSM 18972 / AmH</strain>
    </source>
</reference>
<dbReference type="EMBL" id="CP001279">
    <property type="protein sequence ID" value="ACM92816.1"/>
    <property type="molecule type" value="Genomic_DNA"/>
</dbReference>
<dbReference type="RefSeq" id="WP_015901868.1">
    <property type="nucleotide sequence ID" value="NC_012115.1"/>
</dbReference>
<dbReference type="SMR" id="B9L6M3"/>
<dbReference type="STRING" id="598659.NAMH_1631"/>
<dbReference type="KEGG" id="nam:NAMH_1631"/>
<dbReference type="eggNOG" id="COG0093">
    <property type="taxonomic scope" value="Bacteria"/>
</dbReference>
<dbReference type="HOGENOM" id="CLU_095071_2_1_7"/>
<dbReference type="OrthoDB" id="9806379at2"/>
<dbReference type="Proteomes" id="UP000000448">
    <property type="component" value="Chromosome"/>
</dbReference>
<dbReference type="GO" id="GO:0022625">
    <property type="term" value="C:cytosolic large ribosomal subunit"/>
    <property type="evidence" value="ECO:0007669"/>
    <property type="project" value="TreeGrafter"/>
</dbReference>
<dbReference type="GO" id="GO:0070180">
    <property type="term" value="F:large ribosomal subunit rRNA binding"/>
    <property type="evidence" value="ECO:0007669"/>
    <property type="project" value="TreeGrafter"/>
</dbReference>
<dbReference type="GO" id="GO:0003735">
    <property type="term" value="F:structural constituent of ribosome"/>
    <property type="evidence" value="ECO:0007669"/>
    <property type="project" value="InterPro"/>
</dbReference>
<dbReference type="GO" id="GO:0006412">
    <property type="term" value="P:translation"/>
    <property type="evidence" value="ECO:0007669"/>
    <property type="project" value="UniProtKB-UniRule"/>
</dbReference>
<dbReference type="CDD" id="cd00337">
    <property type="entry name" value="Ribosomal_uL14"/>
    <property type="match status" value="1"/>
</dbReference>
<dbReference type="FunFam" id="2.40.150.20:FF:000001">
    <property type="entry name" value="50S ribosomal protein L14"/>
    <property type="match status" value="1"/>
</dbReference>
<dbReference type="Gene3D" id="2.40.150.20">
    <property type="entry name" value="Ribosomal protein L14"/>
    <property type="match status" value="1"/>
</dbReference>
<dbReference type="HAMAP" id="MF_01367">
    <property type="entry name" value="Ribosomal_uL14"/>
    <property type="match status" value="1"/>
</dbReference>
<dbReference type="InterPro" id="IPR000218">
    <property type="entry name" value="Ribosomal_uL14"/>
</dbReference>
<dbReference type="InterPro" id="IPR005745">
    <property type="entry name" value="Ribosomal_uL14_bac-type"/>
</dbReference>
<dbReference type="InterPro" id="IPR019972">
    <property type="entry name" value="Ribosomal_uL14_CS"/>
</dbReference>
<dbReference type="InterPro" id="IPR036853">
    <property type="entry name" value="Ribosomal_uL14_sf"/>
</dbReference>
<dbReference type="NCBIfam" id="TIGR01067">
    <property type="entry name" value="rplN_bact"/>
    <property type="match status" value="1"/>
</dbReference>
<dbReference type="PANTHER" id="PTHR11761">
    <property type="entry name" value="50S/60S RIBOSOMAL PROTEIN L14/L23"/>
    <property type="match status" value="1"/>
</dbReference>
<dbReference type="PANTHER" id="PTHR11761:SF3">
    <property type="entry name" value="LARGE RIBOSOMAL SUBUNIT PROTEIN UL14M"/>
    <property type="match status" value="1"/>
</dbReference>
<dbReference type="Pfam" id="PF00238">
    <property type="entry name" value="Ribosomal_L14"/>
    <property type="match status" value="1"/>
</dbReference>
<dbReference type="SMART" id="SM01374">
    <property type="entry name" value="Ribosomal_L14"/>
    <property type="match status" value="1"/>
</dbReference>
<dbReference type="SUPFAM" id="SSF50193">
    <property type="entry name" value="Ribosomal protein L14"/>
    <property type="match status" value="1"/>
</dbReference>
<dbReference type="PROSITE" id="PS00049">
    <property type="entry name" value="RIBOSOMAL_L14"/>
    <property type="match status" value="1"/>
</dbReference>
<proteinExistence type="inferred from homology"/>
<keyword id="KW-0687">Ribonucleoprotein</keyword>
<keyword id="KW-0689">Ribosomal protein</keyword>
<keyword id="KW-0694">RNA-binding</keyword>
<keyword id="KW-0699">rRNA-binding</keyword>
<feature type="chain" id="PRO_1000166930" description="Large ribosomal subunit protein uL14">
    <location>
        <begin position="1"/>
        <end position="122"/>
    </location>
</feature>